<feature type="transit peptide" description="Chloroplast" evidence="2">
    <location>
        <begin position="1"/>
        <end position="63"/>
    </location>
</feature>
<feature type="chain" id="PRO_0000398877" description="Phospholipase A1-Ialpha2, chloroplastic">
    <location>
        <begin position="64"/>
        <end position="484"/>
    </location>
</feature>
<feature type="short sequence motif" description="GXSXG" evidence="1">
    <location>
        <begin position="295"/>
        <end position="299"/>
    </location>
</feature>
<feature type="active site" description="Acyl-ester intermediate" evidence="1">
    <location>
        <position position="297"/>
    </location>
</feature>
<feature type="active site" description="Charge relay system" evidence="1">
    <location>
        <position position="360"/>
    </location>
</feature>
<feature type="active site" description="Charge relay system" evidence="1">
    <location>
        <position position="411"/>
    </location>
</feature>
<proteinExistence type="evidence at protein level"/>
<comment type="function">
    <text evidence="3">Acylhydrolase that catalyzes the hydrolysis of phosphatidylcholine at the sn-1 position. Has a strong galactolipase activity toward monogalactosyldiacylglycerol (MGDG) and digalactosyldiacylglycerol (DGDG). Low triacylglycerol (TAG) lipase activity. Plays a role in plant growth and in leaf senescence.</text>
</comment>
<comment type="catalytic activity">
    <reaction evidence="5">
        <text>a 1,2-diacyl-3-O-[alpha-D-galactosyl-(1-&gt;6)-beta-D-galactosyl]-sn-glycerol + H2O = acyl-3-O-[alpha-D-galactosyl-(1-&gt;6)-beta-D-galactosyl]-sn-glycerol + a fatty acid + H(+)</text>
        <dbReference type="Rhea" id="RHEA:48372"/>
        <dbReference type="ChEBI" id="CHEBI:15377"/>
        <dbReference type="ChEBI" id="CHEBI:15378"/>
        <dbReference type="ChEBI" id="CHEBI:28396"/>
        <dbReference type="ChEBI" id="CHEBI:28868"/>
        <dbReference type="ChEBI" id="CHEBI:90310"/>
    </reaction>
    <physiologicalReaction direction="left-to-right" evidence="5">
        <dbReference type="Rhea" id="RHEA:48373"/>
    </physiologicalReaction>
</comment>
<comment type="catalytic activity">
    <reaction evidence="5">
        <text>a 1,2-diacyl-3-O-(beta-D-galactosyl)-sn-glycerol + H2O = an acyl-3-O-(beta-D-galactosyl)-sn-glycerol + a fatty acid + H(+)</text>
        <dbReference type="Rhea" id="RHEA:57084"/>
        <dbReference type="ChEBI" id="CHEBI:15377"/>
        <dbReference type="ChEBI" id="CHEBI:15378"/>
        <dbReference type="ChEBI" id="CHEBI:17615"/>
        <dbReference type="ChEBI" id="CHEBI:28868"/>
        <dbReference type="ChEBI" id="CHEBI:141434"/>
    </reaction>
    <physiologicalReaction direction="left-to-right" evidence="5">
        <dbReference type="Rhea" id="RHEA:57085"/>
    </physiologicalReaction>
</comment>
<comment type="subcellular location">
    <subcellularLocation>
        <location evidence="3 5">Plastid</location>
        <location evidence="3 5">Chloroplast</location>
        <location evidence="3 5">Plastoglobule</location>
    </subcellularLocation>
</comment>
<comment type="tissue specificity">
    <text evidence="3 5">Ubiquitous. Highest expression in flowers and leaves.</text>
</comment>
<comment type="developmental stage">
    <text evidence="3">Induced during senescence.</text>
</comment>
<comment type="induction">
    <text evidence="4 7">Induced by wounding (PubMed:24430866). Not induced by wounding (PubMed:18267087).</text>
</comment>
<comment type="disruption phenotype">
    <text evidence="6">No visible phenotype under standard growth phenotype.</text>
</comment>
<comment type="similarity">
    <text evidence="10">Belongs to the AB hydrolase superfamily. Lipase family.</text>
</comment>
<sequence>MALIQNPNMKHAPFLRNRSPQQTLFIPYTLSLPISYQNPKRLKTANSSSSSSLLAPVILNSPVASSSPPPIYCAPKFPCSSGAATVPLSRVWREIQGCNNWKDLIEPLNPLLQQEITRYGNLVSTCYKAFDLDPNSKRYLNCKYGKQTLLKETEIDQPEDYQVTKYIYATPDININISPIQNEMNRRARWVGYVAASSDDSVKRLGRRDIVVTFRGTVTNPEWLANFMSSLTPARFHPHNPRLDVKVESGFLSLYTSDESESKFGLESCRQQLLSEISRLMNKYKGEEMSITLAGHSMGSSLAQLLAYDIAELGLNRRIGKGDIPVTVFSFAGPRVGNLEFKKRCEELGVKVLRITNVNDPVTKLPGVLFNENFRVLGGFYELPWSCSCYVHVGVELTLDFFDVQNISCVHDLQTYIDLLNQRRTNSRSVDSDEDEDSDNVALEFLKTNGEKMMFLKRQRMMYWSNAVDLLFSFSNHMSYCNIF</sequence>
<organism>
    <name type="scientific">Arabidopsis thaliana</name>
    <name type="common">Mouse-ear cress</name>
    <dbReference type="NCBI Taxonomy" id="3702"/>
    <lineage>
        <taxon>Eukaryota</taxon>
        <taxon>Viridiplantae</taxon>
        <taxon>Streptophyta</taxon>
        <taxon>Embryophyta</taxon>
        <taxon>Tracheophyta</taxon>
        <taxon>Spermatophyta</taxon>
        <taxon>Magnoliopsida</taxon>
        <taxon>eudicotyledons</taxon>
        <taxon>Gunneridae</taxon>
        <taxon>Pentapetalae</taxon>
        <taxon>rosids</taxon>
        <taxon>malvids</taxon>
        <taxon>Brassicales</taxon>
        <taxon>Brassicaceae</taxon>
        <taxon>Camelineae</taxon>
        <taxon>Arabidopsis</taxon>
    </lineage>
</organism>
<keyword id="KW-0150">Chloroplast</keyword>
<keyword id="KW-0378">Hydrolase</keyword>
<keyword id="KW-0442">Lipid degradation</keyword>
<keyword id="KW-0443">Lipid metabolism</keyword>
<keyword id="KW-0934">Plastid</keyword>
<keyword id="KW-1185">Reference proteome</keyword>
<keyword id="KW-0809">Transit peptide</keyword>
<name>PLA13_ARATH</name>
<gene>
    <name evidence="9" type="primary">DALL5</name>
    <name evidence="11" type="ordered locus">At2g31690</name>
    <name evidence="12" type="ORF">T9H9.21</name>
</gene>
<evidence type="ECO:0000250" key="1">
    <source>
        <dbReference type="UniProtKB" id="Q948R1"/>
    </source>
</evidence>
<evidence type="ECO:0000255" key="2"/>
<evidence type="ECO:0000269" key="3">
    <source>
    </source>
</evidence>
<evidence type="ECO:0000269" key="4">
    <source>
    </source>
</evidence>
<evidence type="ECO:0000269" key="5">
    <source>
    </source>
</evidence>
<evidence type="ECO:0000269" key="6">
    <source>
    </source>
</evidence>
<evidence type="ECO:0000269" key="7">
    <source>
    </source>
</evidence>
<evidence type="ECO:0000303" key="8">
    <source>
    </source>
</evidence>
<evidence type="ECO:0000303" key="9">
    <source>
    </source>
</evidence>
<evidence type="ECO:0000305" key="10"/>
<evidence type="ECO:0000312" key="11">
    <source>
        <dbReference type="Araport" id="AT2G31690"/>
    </source>
</evidence>
<evidence type="ECO:0000312" key="12">
    <source>
        <dbReference type="EMBL" id="AAD24845.1"/>
    </source>
</evidence>
<protein>
    <recommendedName>
        <fullName evidence="8">Phospholipase A1-Ialpha2, chloroplastic</fullName>
        <ecNumber evidence="5">3.1.1.-</ecNumber>
    </recommendedName>
    <alternativeName>
        <fullName evidence="9">DAD1-like lipase 5</fullName>
    </alternativeName>
</protein>
<dbReference type="EC" id="3.1.1.-" evidence="5"/>
<dbReference type="EMBL" id="AC007071">
    <property type="protein sequence ID" value="AAD24845.1"/>
    <property type="molecule type" value="Genomic_DNA"/>
</dbReference>
<dbReference type="EMBL" id="CP002685">
    <property type="protein sequence ID" value="AEC08573.1"/>
    <property type="molecule type" value="Genomic_DNA"/>
</dbReference>
<dbReference type="EMBL" id="DQ056559">
    <property type="protein sequence ID" value="AAY78709.1"/>
    <property type="molecule type" value="mRNA"/>
</dbReference>
<dbReference type="PIR" id="H84723">
    <property type="entry name" value="H84723"/>
</dbReference>
<dbReference type="RefSeq" id="NP_180727.1">
    <property type="nucleotide sequence ID" value="NM_128726.1"/>
</dbReference>
<dbReference type="SMR" id="Q9SIN9"/>
<dbReference type="FunCoup" id="Q9SIN9">
    <property type="interactions" value="60"/>
</dbReference>
<dbReference type="STRING" id="3702.Q9SIN9"/>
<dbReference type="SwissLipids" id="SLP:000001922"/>
<dbReference type="ESTHER" id="arath-PLA13">
    <property type="family name" value="Plant_phospholipase"/>
</dbReference>
<dbReference type="PaxDb" id="3702-AT2G31690.1"/>
<dbReference type="EnsemblPlants" id="AT2G31690.1">
    <property type="protein sequence ID" value="AT2G31690.1"/>
    <property type="gene ID" value="AT2G31690"/>
</dbReference>
<dbReference type="GeneID" id="817725"/>
<dbReference type="Gramene" id="AT2G31690.1">
    <property type="protein sequence ID" value="AT2G31690.1"/>
    <property type="gene ID" value="AT2G31690"/>
</dbReference>
<dbReference type="KEGG" id="ath:AT2G31690"/>
<dbReference type="Araport" id="AT2G31690"/>
<dbReference type="TAIR" id="AT2G31690">
    <property type="gene designation" value="DALL5"/>
</dbReference>
<dbReference type="eggNOG" id="KOG4569">
    <property type="taxonomic scope" value="Eukaryota"/>
</dbReference>
<dbReference type="HOGENOM" id="CLU_018841_2_0_1"/>
<dbReference type="InParanoid" id="Q9SIN9"/>
<dbReference type="OMA" id="CPSRWIG"/>
<dbReference type="PhylomeDB" id="Q9SIN9"/>
<dbReference type="BioCyc" id="ARA:AT2G31690-MONOMER"/>
<dbReference type="PRO" id="PR:Q9SIN9"/>
<dbReference type="Proteomes" id="UP000006548">
    <property type="component" value="Chromosome 2"/>
</dbReference>
<dbReference type="ExpressionAtlas" id="Q9SIN9">
    <property type="expression patterns" value="baseline and differential"/>
</dbReference>
<dbReference type="GO" id="GO:0009570">
    <property type="term" value="C:chloroplast stroma"/>
    <property type="evidence" value="ECO:0000314"/>
    <property type="project" value="TAIR"/>
</dbReference>
<dbReference type="GO" id="GO:0010287">
    <property type="term" value="C:plastoglobule"/>
    <property type="evidence" value="ECO:0007669"/>
    <property type="project" value="UniProtKB-SubCell"/>
</dbReference>
<dbReference type="GO" id="GO:0047714">
    <property type="term" value="F:galactolipase activity"/>
    <property type="evidence" value="ECO:0000314"/>
    <property type="project" value="TAIR"/>
</dbReference>
<dbReference type="GO" id="GO:0008970">
    <property type="term" value="F:phospholipase A1 activity"/>
    <property type="evidence" value="ECO:0000314"/>
    <property type="project" value="TAIR"/>
</dbReference>
<dbReference type="GO" id="GO:0004806">
    <property type="term" value="F:triacylglycerol lipase activity"/>
    <property type="evidence" value="ECO:0000314"/>
    <property type="project" value="TAIR"/>
</dbReference>
<dbReference type="GO" id="GO:0010150">
    <property type="term" value="P:leaf senescence"/>
    <property type="evidence" value="ECO:0000315"/>
    <property type="project" value="TAIR"/>
</dbReference>
<dbReference type="GO" id="GO:0010027">
    <property type="term" value="P:thylakoid membrane organization"/>
    <property type="evidence" value="ECO:0000314"/>
    <property type="project" value="TAIR"/>
</dbReference>
<dbReference type="GO" id="GO:0019433">
    <property type="term" value="P:triglyceride catabolic process"/>
    <property type="evidence" value="ECO:0000314"/>
    <property type="project" value="TAIR"/>
</dbReference>
<dbReference type="CDD" id="cd00519">
    <property type="entry name" value="Lipase_3"/>
    <property type="match status" value="1"/>
</dbReference>
<dbReference type="FunFam" id="3.40.50.1820:FF:000106">
    <property type="entry name" value="Galactolipase DONGLE, chloroplastic"/>
    <property type="match status" value="1"/>
</dbReference>
<dbReference type="Gene3D" id="3.40.50.1820">
    <property type="entry name" value="alpha/beta hydrolase"/>
    <property type="match status" value="1"/>
</dbReference>
<dbReference type="InterPro" id="IPR029058">
    <property type="entry name" value="AB_hydrolase_fold"/>
</dbReference>
<dbReference type="InterPro" id="IPR002921">
    <property type="entry name" value="Fungal_lipase-type"/>
</dbReference>
<dbReference type="PANTHER" id="PTHR31403:SF4">
    <property type="entry name" value="PHOSPHOLIPASE A1-IALPHA2, CHLOROPLASTIC"/>
    <property type="match status" value="1"/>
</dbReference>
<dbReference type="PANTHER" id="PTHR31403">
    <property type="entry name" value="PHOSPHOLIPASE A1-IBETA2, CHLOROPLASTIC"/>
    <property type="match status" value="1"/>
</dbReference>
<dbReference type="Pfam" id="PF01764">
    <property type="entry name" value="Lipase_3"/>
    <property type="match status" value="1"/>
</dbReference>
<dbReference type="SUPFAM" id="SSF53474">
    <property type="entry name" value="alpha/beta-Hydrolases"/>
    <property type="match status" value="1"/>
</dbReference>
<reference key="1">
    <citation type="journal article" date="1999" name="Nature">
        <title>Sequence and analysis of chromosome 2 of the plant Arabidopsis thaliana.</title>
        <authorList>
            <person name="Lin X."/>
            <person name="Kaul S."/>
            <person name="Rounsley S.D."/>
            <person name="Shea T.P."/>
            <person name="Benito M.-I."/>
            <person name="Town C.D."/>
            <person name="Fujii C.Y."/>
            <person name="Mason T.M."/>
            <person name="Bowman C.L."/>
            <person name="Barnstead M.E."/>
            <person name="Feldblyum T.V."/>
            <person name="Buell C.R."/>
            <person name="Ketchum K.A."/>
            <person name="Lee J.J."/>
            <person name="Ronning C.M."/>
            <person name="Koo H.L."/>
            <person name="Moffat K.S."/>
            <person name="Cronin L.A."/>
            <person name="Shen M."/>
            <person name="Pai G."/>
            <person name="Van Aken S."/>
            <person name="Umayam L."/>
            <person name="Tallon L.J."/>
            <person name="Gill J.E."/>
            <person name="Adams M.D."/>
            <person name="Carrera A.J."/>
            <person name="Creasy T.H."/>
            <person name="Goodman H.M."/>
            <person name="Somerville C.R."/>
            <person name="Copenhaver G.P."/>
            <person name="Preuss D."/>
            <person name="Nierman W.C."/>
            <person name="White O."/>
            <person name="Eisen J.A."/>
            <person name="Salzberg S.L."/>
            <person name="Fraser C.M."/>
            <person name="Venter J.C."/>
        </authorList>
    </citation>
    <scope>NUCLEOTIDE SEQUENCE [LARGE SCALE GENOMIC DNA]</scope>
    <source>
        <strain>cv. Columbia</strain>
    </source>
</reference>
<reference key="2">
    <citation type="journal article" date="2017" name="Plant J.">
        <title>Araport11: a complete reannotation of the Arabidopsis thaliana reference genome.</title>
        <authorList>
            <person name="Cheng C.Y."/>
            <person name="Krishnakumar V."/>
            <person name="Chan A.P."/>
            <person name="Thibaud-Nissen F."/>
            <person name="Schobel S."/>
            <person name="Town C.D."/>
        </authorList>
    </citation>
    <scope>GENOME REANNOTATION</scope>
    <source>
        <strain>cv. Columbia</strain>
    </source>
</reference>
<reference key="3">
    <citation type="submission" date="2005-05" db="EMBL/GenBank/DDBJ databases">
        <authorList>
            <person name="Underwood B.A."/>
            <person name="Xiao Y.-L."/>
            <person name="Moskal W.A. Jr."/>
            <person name="Monaghan E.L."/>
            <person name="Wang W."/>
            <person name="Redman J.C."/>
            <person name="Wu H.C."/>
            <person name="Utterback T."/>
            <person name="Town C.D."/>
        </authorList>
    </citation>
    <scope>NUCLEOTIDE SEQUENCE [LARGE SCALE MRNA]</scope>
    <source>
        <strain>cv. Columbia</strain>
    </source>
</reference>
<reference key="4">
    <citation type="journal article" date="2004" name="Trends Plant Sci.">
        <title>Phospholipid-derived signaling mediated by phospholipase A in plants.</title>
        <authorList>
            <person name="Ryu S.B."/>
        </authorList>
    </citation>
    <scope>GENE FAMILY</scope>
    <scope>NOMENCLATURE</scope>
</reference>
<reference key="5">
    <citation type="journal article" date="2007" name="Plant Physiol.">
        <title>Characterization of a plastid triacylglycerol lipase from Arabidopsis.</title>
        <authorList>
            <person name="Padham A.K."/>
            <person name="Hopkins M.T."/>
            <person name="Wang T.W."/>
            <person name="McNamara L.M."/>
            <person name="Lo M."/>
            <person name="Richardson L.G."/>
            <person name="Smith M.D."/>
            <person name="Taylor C.A."/>
            <person name="Thompson J.E."/>
        </authorList>
    </citation>
    <scope>FUNCTION</scope>
    <scope>SUBCELLULAR LOCATION</scope>
    <scope>TISSUE SPECIFICITY</scope>
    <scope>DEVELOPMENTAL STAGE</scope>
</reference>
<reference key="6">
    <citation type="journal article" date="2008" name="Dev. Cell">
        <title>Cooperation and functional diversification of two closely related galactolipase genes for jasmonate biosynthesis.</title>
        <authorList>
            <person name="Hyun Y."/>
            <person name="Choi S."/>
            <person name="Hwang H.J."/>
            <person name="Yu J."/>
            <person name="Nam S.J."/>
            <person name="Ko J."/>
            <person name="Park J.Y."/>
            <person name="Seo Y.S."/>
            <person name="Kim E.Y."/>
            <person name="Ryu S.B."/>
            <person name="Kim W.T."/>
            <person name="Lee Y.H."/>
            <person name="Kang H."/>
            <person name="Lee I."/>
        </authorList>
    </citation>
    <scope>INDUCTION</scope>
</reference>
<reference key="7">
    <citation type="journal article" date="2009" name="FEBS Lett.">
        <title>Enzymatic characterization of class I DAD1-like acylhydrolase members targeted to chloroplast in Arabidopsis.</title>
        <authorList>
            <person name="Seo Y.S."/>
            <person name="Kim E.Y."/>
            <person name="Kim J.H."/>
            <person name="Kim W.T."/>
        </authorList>
    </citation>
    <scope>CATALYTIC ACTIVITY</scope>
    <scope>SUBCELLULAR LOCATION</scope>
    <scope>TISSUE SPECIFICITY</scope>
</reference>
<reference key="8">
    <citation type="journal article" date="2010" name="Plant Physiol.">
        <title>DONGLE and DEFECTIVE IN ANTHER DEHISCENCE1 lipases are not essential for wound- and pathogen-induced jasmonate biosynthesis: redundant lipases contribute to jasmonate formation.</title>
        <authorList>
            <person name="Ellinger D."/>
            <person name="Stingl N."/>
            <person name="Kubigsteltig I.I."/>
            <person name="Bals T."/>
            <person name="Juenger M."/>
            <person name="Pollmann S."/>
            <person name="Berger S."/>
            <person name="Schuenemann D."/>
            <person name="Mueller M.J."/>
        </authorList>
    </citation>
    <scope>DISRUPTION PHENOTYPE</scope>
</reference>
<reference key="9">
    <citation type="journal article" date="2014" name="Plant Cell Rep.">
        <title>Wound-induced expression of DEFECTIVE IN ANTHER DEHISCENCE1 and DAD1-like lipase genes is mediated by both CORONATINE INSENSITIVE1-dependent and independent pathways in Arabidopsis thaliana.</title>
        <authorList>
            <person name="Rudus I."/>
            <person name="Terai H."/>
            <person name="Shimizu T."/>
            <person name="Kojima H."/>
            <person name="Hattori K."/>
            <person name="Nishimori Y."/>
            <person name="Tsukagoshi H."/>
            <person name="Kamiya Y."/>
            <person name="Seo M."/>
            <person name="Nakamura K."/>
            <person name="Kepczynski J."/>
            <person name="Ishiguro S."/>
        </authorList>
    </citation>
    <scope>INDUCTION BY WOUNDING</scope>
</reference>
<accession>Q9SIN9</accession>